<gene>
    <name evidence="1" type="primary">pxpA</name>
    <name type="ordered locus">SPO3659</name>
</gene>
<name>PXPA_RUEPO</name>
<reference key="1">
    <citation type="journal article" date="2004" name="Nature">
        <title>Genome sequence of Silicibacter pomeroyi reveals adaptations to the marine environment.</title>
        <authorList>
            <person name="Moran M.A."/>
            <person name="Buchan A."/>
            <person name="Gonzalez J.M."/>
            <person name="Heidelberg J.F."/>
            <person name="Whitman W.B."/>
            <person name="Kiene R.P."/>
            <person name="Henriksen J.R."/>
            <person name="King G.M."/>
            <person name="Belas R."/>
            <person name="Fuqua C."/>
            <person name="Brinkac L.M."/>
            <person name="Lewis M."/>
            <person name="Johri S."/>
            <person name="Weaver B."/>
            <person name="Pai G."/>
            <person name="Eisen J.A."/>
            <person name="Rahe E."/>
            <person name="Sheldon W.M."/>
            <person name="Ye W."/>
            <person name="Miller T.R."/>
            <person name="Carlton J."/>
            <person name="Rasko D.A."/>
            <person name="Paulsen I.T."/>
            <person name="Ren Q."/>
            <person name="Daugherty S.C."/>
            <person name="DeBoy R.T."/>
            <person name="Dodson R.J."/>
            <person name="Durkin A.S."/>
            <person name="Madupu R."/>
            <person name="Nelson W.C."/>
            <person name="Sullivan S.A."/>
            <person name="Rosovitz M.J."/>
            <person name="Haft D.H."/>
            <person name="Selengut J."/>
            <person name="Ward N."/>
        </authorList>
    </citation>
    <scope>NUCLEOTIDE SEQUENCE [LARGE SCALE GENOMIC DNA]</scope>
    <source>
        <strain>ATCC 700808 / DSM 15171 / DSS-3</strain>
    </source>
</reference>
<reference key="2">
    <citation type="journal article" date="2014" name="Stand. Genomic Sci.">
        <title>An updated genome annotation for the model marine bacterium Ruegeria pomeroyi DSS-3.</title>
        <authorList>
            <person name="Rivers A.R."/>
            <person name="Smith C.B."/>
            <person name="Moran M.A."/>
        </authorList>
    </citation>
    <scope>GENOME REANNOTATION</scope>
    <source>
        <strain>ATCC 700808 / DSM 15171 / DSS-3</strain>
    </source>
</reference>
<protein>
    <recommendedName>
        <fullName evidence="1">5-oxoprolinase subunit A</fullName>
        <shortName evidence="1">5-OPase subunit A</shortName>
        <ecNumber evidence="1">3.5.2.9</ecNumber>
    </recommendedName>
    <alternativeName>
        <fullName evidence="1">5-oxoprolinase (ATP-hydrolyzing) subunit A</fullName>
    </alternativeName>
</protein>
<evidence type="ECO:0000255" key="1">
    <source>
        <dbReference type="HAMAP-Rule" id="MF_00691"/>
    </source>
</evidence>
<keyword id="KW-0067">ATP-binding</keyword>
<keyword id="KW-0378">Hydrolase</keyword>
<keyword id="KW-0547">Nucleotide-binding</keyword>
<keyword id="KW-1185">Reference proteome</keyword>
<accession>Q5LMA4</accession>
<proteinExistence type="inferred from homology"/>
<dbReference type="EC" id="3.5.2.9" evidence="1"/>
<dbReference type="EMBL" id="CP000031">
    <property type="protein sequence ID" value="AAV96882.1"/>
    <property type="molecule type" value="Genomic_DNA"/>
</dbReference>
<dbReference type="RefSeq" id="WP_011049339.1">
    <property type="nucleotide sequence ID" value="NC_003911.12"/>
</dbReference>
<dbReference type="SMR" id="Q5LMA4"/>
<dbReference type="STRING" id="246200.SPO3659"/>
<dbReference type="PaxDb" id="246200-SPO3659"/>
<dbReference type="KEGG" id="sil:SPO3659"/>
<dbReference type="eggNOG" id="COG1540">
    <property type="taxonomic scope" value="Bacteria"/>
</dbReference>
<dbReference type="HOGENOM" id="CLU_069535_0_0_5"/>
<dbReference type="Proteomes" id="UP000001023">
    <property type="component" value="Chromosome"/>
</dbReference>
<dbReference type="GO" id="GO:0017168">
    <property type="term" value="F:5-oxoprolinase (ATP-hydrolyzing) activity"/>
    <property type="evidence" value="ECO:0007669"/>
    <property type="project" value="UniProtKB-UniRule"/>
</dbReference>
<dbReference type="GO" id="GO:0005524">
    <property type="term" value="F:ATP binding"/>
    <property type="evidence" value="ECO:0007669"/>
    <property type="project" value="UniProtKB-UniRule"/>
</dbReference>
<dbReference type="GO" id="GO:0005975">
    <property type="term" value="P:carbohydrate metabolic process"/>
    <property type="evidence" value="ECO:0007669"/>
    <property type="project" value="InterPro"/>
</dbReference>
<dbReference type="CDD" id="cd10787">
    <property type="entry name" value="LamB_YcsF_like"/>
    <property type="match status" value="1"/>
</dbReference>
<dbReference type="Gene3D" id="3.20.20.370">
    <property type="entry name" value="Glycoside hydrolase/deacetylase"/>
    <property type="match status" value="1"/>
</dbReference>
<dbReference type="HAMAP" id="MF_00691">
    <property type="entry name" value="PxpA"/>
    <property type="match status" value="1"/>
</dbReference>
<dbReference type="InterPro" id="IPR011330">
    <property type="entry name" value="Glyco_hydro/deAcase_b/a-brl"/>
</dbReference>
<dbReference type="InterPro" id="IPR005501">
    <property type="entry name" value="LamB/YcsF/PxpA-like"/>
</dbReference>
<dbReference type="NCBIfam" id="NF003814">
    <property type="entry name" value="PRK05406.1-3"/>
    <property type="match status" value="1"/>
</dbReference>
<dbReference type="NCBIfam" id="NF003816">
    <property type="entry name" value="PRK05406.1-5"/>
    <property type="match status" value="1"/>
</dbReference>
<dbReference type="PANTHER" id="PTHR30292:SF0">
    <property type="entry name" value="5-OXOPROLINASE SUBUNIT A"/>
    <property type="match status" value="1"/>
</dbReference>
<dbReference type="PANTHER" id="PTHR30292">
    <property type="entry name" value="UNCHARACTERIZED PROTEIN YBGL-RELATED"/>
    <property type="match status" value="1"/>
</dbReference>
<dbReference type="Pfam" id="PF03746">
    <property type="entry name" value="LamB_YcsF"/>
    <property type="match status" value="1"/>
</dbReference>
<dbReference type="SUPFAM" id="SSF88713">
    <property type="entry name" value="Glycoside hydrolase/deacetylase"/>
    <property type="match status" value="1"/>
</dbReference>
<sequence>MTRVDLNADMGESFGPWKMGDDDSLLKIITSANIACGFHAGDPDVMAKTMALAAENGVGIGAHPGFPDLQGFGRRNMKVPHDSLRNLVRYQLGAALGMARAVGTQVRHLKLHGALANMCSVDQDMARACYQGALDVDPDIIIMVLAVTKQEQAVRELGCKWVGEIFADRAYNDDGTLVDRALPGAVIHDPDLAGPRMLKMVRAGAIITESGKHLETSVDTICLHGDGPTAVQIARSVRACLEEGGVSVTAFER</sequence>
<comment type="function">
    <text evidence="1">Catalyzes the cleavage of 5-oxoproline to form L-glutamate coupled to the hydrolysis of ATP to ADP and inorganic phosphate.</text>
</comment>
<comment type="catalytic activity">
    <reaction evidence="1">
        <text>5-oxo-L-proline + ATP + 2 H2O = L-glutamate + ADP + phosphate + H(+)</text>
        <dbReference type="Rhea" id="RHEA:10348"/>
        <dbReference type="ChEBI" id="CHEBI:15377"/>
        <dbReference type="ChEBI" id="CHEBI:15378"/>
        <dbReference type="ChEBI" id="CHEBI:29985"/>
        <dbReference type="ChEBI" id="CHEBI:30616"/>
        <dbReference type="ChEBI" id="CHEBI:43474"/>
        <dbReference type="ChEBI" id="CHEBI:58402"/>
        <dbReference type="ChEBI" id="CHEBI:456216"/>
        <dbReference type="EC" id="3.5.2.9"/>
    </reaction>
</comment>
<comment type="subunit">
    <text evidence="1">Forms a complex composed of PxpA, PxpB and PxpC.</text>
</comment>
<comment type="similarity">
    <text evidence="1">Belongs to the LamB/PxpA family.</text>
</comment>
<feature type="chain" id="PRO_0000185042" description="5-oxoprolinase subunit A">
    <location>
        <begin position="1"/>
        <end position="253"/>
    </location>
</feature>
<organism>
    <name type="scientific">Ruegeria pomeroyi (strain ATCC 700808 / DSM 15171 / DSS-3)</name>
    <name type="common">Silicibacter pomeroyi</name>
    <dbReference type="NCBI Taxonomy" id="246200"/>
    <lineage>
        <taxon>Bacteria</taxon>
        <taxon>Pseudomonadati</taxon>
        <taxon>Pseudomonadota</taxon>
        <taxon>Alphaproteobacteria</taxon>
        <taxon>Rhodobacterales</taxon>
        <taxon>Roseobacteraceae</taxon>
        <taxon>Ruegeria</taxon>
    </lineage>
</organism>